<gene>
    <name evidence="1" type="primary">pheS</name>
    <name type="ordered locus">MYCGA3610</name>
    <name type="ORF">MGA_1278</name>
</gene>
<organism>
    <name type="scientific">Mycoplasmoides gallisepticum (strain R(low / passage 15 / clone 2))</name>
    <name type="common">Mycoplasma gallisepticum</name>
    <dbReference type="NCBI Taxonomy" id="710127"/>
    <lineage>
        <taxon>Bacteria</taxon>
        <taxon>Bacillati</taxon>
        <taxon>Mycoplasmatota</taxon>
        <taxon>Mycoplasmoidales</taxon>
        <taxon>Mycoplasmoidaceae</taxon>
        <taxon>Mycoplasmoides</taxon>
    </lineage>
</organism>
<protein>
    <recommendedName>
        <fullName evidence="1">Phenylalanine--tRNA ligase alpha subunit</fullName>
        <ecNumber evidence="1">6.1.1.20</ecNumber>
    </recommendedName>
    <alternativeName>
        <fullName evidence="1">Phenylalanyl-tRNA synthetase alpha subunit</fullName>
        <shortName evidence="1">PheRS</shortName>
    </alternativeName>
</protein>
<evidence type="ECO:0000255" key="1">
    <source>
        <dbReference type="HAMAP-Rule" id="MF_00281"/>
    </source>
</evidence>
<proteinExistence type="inferred from homology"/>
<accession>Q7NBB8</accession>
<keyword id="KW-0030">Aminoacyl-tRNA synthetase</keyword>
<keyword id="KW-0067">ATP-binding</keyword>
<keyword id="KW-0963">Cytoplasm</keyword>
<keyword id="KW-0436">Ligase</keyword>
<keyword id="KW-0460">Magnesium</keyword>
<keyword id="KW-0479">Metal-binding</keyword>
<keyword id="KW-0547">Nucleotide-binding</keyword>
<keyword id="KW-0648">Protein biosynthesis</keyword>
<keyword id="KW-1185">Reference proteome</keyword>
<comment type="catalytic activity">
    <reaction evidence="1">
        <text>tRNA(Phe) + L-phenylalanine + ATP = L-phenylalanyl-tRNA(Phe) + AMP + diphosphate + H(+)</text>
        <dbReference type="Rhea" id="RHEA:19413"/>
        <dbReference type="Rhea" id="RHEA-COMP:9668"/>
        <dbReference type="Rhea" id="RHEA-COMP:9699"/>
        <dbReference type="ChEBI" id="CHEBI:15378"/>
        <dbReference type="ChEBI" id="CHEBI:30616"/>
        <dbReference type="ChEBI" id="CHEBI:33019"/>
        <dbReference type="ChEBI" id="CHEBI:58095"/>
        <dbReference type="ChEBI" id="CHEBI:78442"/>
        <dbReference type="ChEBI" id="CHEBI:78531"/>
        <dbReference type="ChEBI" id="CHEBI:456215"/>
        <dbReference type="EC" id="6.1.1.20"/>
    </reaction>
</comment>
<comment type="cofactor">
    <cofactor evidence="1">
        <name>Mg(2+)</name>
        <dbReference type="ChEBI" id="CHEBI:18420"/>
    </cofactor>
    <text evidence="1">Binds 2 magnesium ions per tetramer.</text>
</comment>
<comment type="subunit">
    <text evidence="1">Tetramer of two alpha and two beta subunits.</text>
</comment>
<comment type="subcellular location">
    <subcellularLocation>
        <location evidence="1">Cytoplasm</location>
    </subcellularLocation>
</comment>
<comment type="similarity">
    <text evidence="1">Belongs to the class-II aminoacyl-tRNA synthetase family. Phe-tRNA synthetase alpha subunit type 1 subfamily.</text>
</comment>
<reference key="1">
    <citation type="journal article" date="2003" name="Microbiology">
        <title>The complete genome sequence of the avian pathogen Mycoplasma gallisepticum strain R(low).</title>
        <authorList>
            <person name="Papazisi L."/>
            <person name="Gorton T.S."/>
            <person name="Kutish G."/>
            <person name="Markham P.F."/>
            <person name="Browning G.F."/>
            <person name="Nguyen D.K."/>
            <person name="Swartzell S."/>
            <person name="Madan A."/>
            <person name="Mahairas G."/>
            <person name="Geary S.J."/>
        </authorList>
    </citation>
    <scope>NUCLEOTIDE SEQUENCE [LARGE SCALE GENOMIC DNA]</scope>
    <source>
        <strain>R(low / passage 15 / clone 2)</strain>
    </source>
</reference>
<feature type="chain" id="PRO_0000126728" description="Phenylalanine--tRNA ligase alpha subunit">
    <location>
        <begin position="1"/>
        <end position="338"/>
    </location>
</feature>
<feature type="binding site" evidence="1">
    <location>
        <position position="252"/>
    </location>
    <ligand>
        <name>Mg(2+)</name>
        <dbReference type="ChEBI" id="CHEBI:18420"/>
        <note>shared with beta subunit</note>
    </ligand>
</feature>
<dbReference type="EC" id="6.1.1.20" evidence="1"/>
<dbReference type="EMBL" id="AE015450">
    <property type="protein sequence ID" value="AAP56711.2"/>
    <property type="molecule type" value="Genomic_DNA"/>
</dbReference>
<dbReference type="RefSeq" id="WP_011113607.1">
    <property type="nucleotide sequence ID" value="NC_004829.2"/>
</dbReference>
<dbReference type="SMR" id="Q7NBB8"/>
<dbReference type="GeneID" id="93510193"/>
<dbReference type="KEGG" id="mga:MGA_1278"/>
<dbReference type="PATRIC" id="fig|233150.7.peg.406"/>
<dbReference type="HOGENOM" id="CLU_025086_0_1_14"/>
<dbReference type="OrthoDB" id="9800719at2"/>
<dbReference type="Proteomes" id="UP000001418">
    <property type="component" value="Chromosome"/>
</dbReference>
<dbReference type="GO" id="GO:0005737">
    <property type="term" value="C:cytoplasm"/>
    <property type="evidence" value="ECO:0007669"/>
    <property type="project" value="UniProtKB-SubCell"/>
</dbReference>
<dbReference type="GO" id="GO:0005524">
    <property type="term" value="F:ATP binding"/>
    <property type="evidence" value="ECO:0007669"/>
    <property type="project" value="UniProtKB-UniRule"/>
</dbReference>
<dbReference type="GO" id="GO:0000287">
    <property type="term" value="F:magnesium ion binding"/>
    <property type="evidence" value="ECO:0007669"/>
    <property type="project" value="UniProtKB-UniRule"/>
</dbReference>
<dbReference type="GO" id="GO:0004826">
    <property type="term" value="F:phenylalanine-tRNA ligase activity"/>
    <property type="evidence" value="ECO:0007669"/>
    <property type="project" value="UniProtKB-UniRule"/>
</dbReference>
<dbReference type="GO" id="GO:0000049">
    <property type="term" value="F:tRNA binding"/>
    <property type="evidence" value="ECO:0007669"/>
    <property type="project" value="InterPro"/>
</dbReference>
<dbReference type="GO" id="GO:0006432">
    <property type="term" value="P:phenylalanyl-tRNA aminoacylation"/>
    <property type="evidence" value="ECO:0007669"/>
    <property type="project" value="UniProtKB-UniRule"/>
</dbReference>
<dbReference type="CDD" id="cd00496">
    <property type="entry name" value="PheRS_alpha_core"/>
    <property type="match status" value="1"/>
</dbReference>
<dbReference type="Gene3D" id="3.30.930.10">
    <property type="entry name" value="Bira Bifunctional Protein, Domain 2"/>
    <property type="match status" value="1"/>
</dbReference>
<dbReference type="HAMAP" id="MF_00281">
    <property type="entry name" value="Phe_tRNA_synth_alpha1"/>
    <property type="match status" value="1"/>
</dbReference>
<dbReference type="InterPro" id="IPR006195">
    <property type="entry name" value="aa-tRNA-synth_II"/>
</dbReference>
<dbReference type="InterPro" id="IPR045864">
    <property type="entry name" value="aa-tRNA-synth_II/BPL/LPL"/>
</dbReference>
<dbReference type="InterPro" id="IPR004529">
    <property type="entry name" value="Phe-tRNA-synth_IIc_asu"/>
</dbReference>
<dbReference type="InterPro" id="IPR022911">
    <property type="entry name" value="Phe_tRNA_ligase_alpha1_bac"/>
</dbReference>
<dbReference type="InterPro" id="IPR002319">
    <property type="entry name" value="Phenylalanyl-tRNA_Synthase"/>
</dbReference>
<dbReference type="NCBIfam" id="TIGR00468">
    <property type="entry name" value="pheS"/>
    <property type="match status" value="1"/>
</dbReference>
<dbReference type="PANTHER" id="PTHR11538:SF41">
    <property type="entry name" value="PHENYLALANINE--TRNA LIGASE, MITOCHONDRIAL"/>
    <property type="match status" value="1"/>
</dbReference>
<dbReference type="PANTHER" id="PTHR11538">
    <property type="entry name" value="PHENYLALANYL-TRNA SYNTHETASE"/>
    <property type="match status" value="1"/>
</dbReference>
<dbReference type="Pfam" id="PF01409">
    <property type="entry name" value="tRNA-synt_2d"/>
    <property type="match status" value="1"/>
</dbReference>
<dbReference type="SUPFAM" id="SSF55681">
    <property type="entry name" value="Class II aaRS and biotin synthetases"/>
    <property type="match status" value="1"/>
</dbReference>
<dbReference type="PROSITE" id="PS50862">
    <property type="entry name" value="AA_TRNA_LIGASE_II"/>
    <property type="match status" value="1"/>
</dbReference>
<name>SYFA_MYCGA</name>
<sequence length="338" mass="39438">MDQIKKIIDNFKQTISSVDNQKELIVTKNIFVKKHVTPLFQQLRELEELAVKKAFGKELNFLQEAIQELFEEKNQQLVINLDQNQKPAYDLMIPALDLVDGSIHPLNLVVNQIVDFFKKFNFTIVNYPELVTTKHCFDDLNIPLDHPGRSKTDTFYVSDKQLLRTHCTAGTIEAIAAMNKHKDIRVISFGNVYRNDTDDATHSHQFMQMDFMWVNKDLSLSNLKWFVTKFIEHMFGNDLKTRFRLSHFPFTEPSFEVDVECWNCQSGCFLCKKTRWIEIMGSGILHPKVLEAAHIDPEKMVGIAAGIGIERIAMLKNNITDIRDFYFNDFRFIKQFYE</sequence>